<evidence type="ECO:0000269" key="1">
    <source>
    </source>
</evidence>
<feature type="chain" id="PRO_0000247783" description="Uncharacterized protein YML007C-A, mitochondrial">
    <location>
        <begin position="1"/>
        <end position="36"/>
    </location>
</feature>
<accession>Q3E7A6</accession>
<accession>D6VZG7</accession>
<sequence>MVHFIFIALRSMRFMRRLVRNLQYLLLPITSSLLFI</sequence>
<proteinExistence type="evidence at protein level"/>
<organism>
    <name type="scientific">Saccharomyces cerevisiae (strain ATCC 204508 / S288c)</name>
    <name type="common">Baker's yeast</name>
    <dbReference type="NCBI Taxonomy" id="559292"/>
    <lineage>
        <taxon>Eukaryota</taxon>
        <taxon>Fungi</taxon>
        <taxon>Dikarya</taxon>
        <taxon>Ascomycota</taxon>
        <taxon>Saccharomycotina</taxon>
        <taxon>Saccharomycetes</taxon>
        <taxon>Saccharomycetales</taxon>
        <taxon>Saccharomycetaceae</taxon>
        <taxon>Saccharomyces</taxon>
    </lineage>
</organism>
<comment type="subcellular location">
    <subcellularLocation>
        <location evidence="1">Mitochondrion</location>
    </subcellularLocation>
</comment>
<dbReference type="EMBL" id="Z49810">
    <property type="status" value="NOT_ANNOTATED_CDS"/>
    <property type="molecule type" value="Genomic_DNA"/>
</dbReference>
<dbReference type="EMBL" id="BK006946">
    <property type="protein sequence ID" value="DAA09891.1"/>
    <property type="molecule type" value="Genomic_DNA"/>
</dbReference>
<dbReference type="BioGRID" id="35162">
    <property type="interactions" value="30"/>
</dbReference>
<dbReference type="FunCoup" id="Q3E7A6">
    <property type="interactions" value="3"/>
</dbReference>
<dbReference type="STRING" id="4932.YML007C-A"/>
<dbReference type="PaxDb" id="4932-YML007C-A"/>
<dbReference type="EnsemblFungi" id="YML007C-A_mRNA">
    <property type="protein sequence ID" value="YML007C-A"/>
    <property type="gene ID" value="YML007C-A"/>
</dbReference>
<dbReference type="KEGG" id="sce:YML007C-A"/>
<dbReference type="AGR" id="SGD:S000007621"/>
<dbReference type="SGD" id="S000007621">
    <property type="gene designation" value="YML007C-A"/>
</dbReference>
<dbReference type="VEuPathDB" id="FungiDB:YML007C-A"/>
<dbReference type="HOGENOM" id="CLU_3359965_0_0_1"/>
<dbReference type="InParanoid" id="Q3E7A6"/>
<dbReference type="BioCyc" id="YEAST:G3O-33023-MONOMER"/>
<dbReference type="BioGRID-ORCS" id="855004">
    <property type="hits" value="0 hits in 10 CRISPR screens"/>
</dbReference>
<dbReference type="PRO" id="PR:Q3E7A6"/>
<dbReference type="Proteomes" id="UP000002311">
    <property type="component" value="Chromosome XIII"/>
</dbReference>
<dbReference type="GO" id="GO:0005739">
    <property type="term" value="C:mitochondrion"/>
    <property type="evidence" value="ECO:0007005"/>
    <property type="project" value="SGD"/>
</dbReference>
<gene>
    <name type="ordered locus">YML007C-A</name>
</gene>
<protein>
    <recommendedName>
        <fullName>Uncharacterized protein YML007C-A, mitochondrial</fullName>
    </recommendedName>
</protein>
<keyword id="KW-0496">Mitochondrion</keyword>
<keyword id="KW-1185">Reference proteome</keyword>
<reference key="1">
    <citation type="journal article" date="1997" name="Nature">
        <title>The nucleotide sequence of Saccharomyces cerevisiae chromosome XIII.</title>
        <authorList>
            <person name="Bowman S."/>
            <person name="Churcher C.M."/>
            <person name="Badcock K."/>
            <person name="Brown D."/>
            <person name="Chillingworth T."/>
            <person name="Connor R."/>
            <person name="Dedman K."/>
            <person name="Devlin K."/>
            <person name="Gentles S."/>
            <person name="Hamlin N."/>
            <person name="Hunt S."/>
            <person name="Jagels K."/>
            <person name="Lye G."/>
            <person name="Moule S."/>
            <person name="Odell C."/>
            <person name="Pearson D."/>
            <person name="Rajandream M.A."/>
            <person name="Rice P."/>
            <person name="Skelton J."/>
            <person name="Walsh S.V."/>
            <person name="Whitehead S."/>
            <person name="Barrell B.G."/>
        </authorList>
    </citation>
    <scope>NUCLEOTIDE SEQUENCE [LARGE SCALE GENOMIC DNA]</scope>
    <source>
        <strain>ATCC 204508 / S288c</strain>
    </source>
</reference>
<reference key="2">
    <citation type="journal article" date="2014" name="G3 (Bethesda)">
        <title>The reference genome sequence of Saccharomyces cerevisiae: Then and now.</title>
        <authorList>
            <person name="Engel S.R."/>
            <person name="Dietrich F.S."/>
            <person name="Fisk D.G."/>
            <person name="Binkley G."/>
            <person name="Balakrishnan R."/>
            <person name="Costanzo M.C."/>
            <person name="Dwight S.S."/>
            <person name="Hitz B.C."/>
            <person name="Karra K."/>
            <person name="Nash R.S."/>
            <person name="Weng S."/>
            <person name="Wong E.D."/>
            <person name="Lloyd P."/>
            <person name="Skrzypek M.S."/>
            <person name="Miyasato S.R."/>
            <person name="Simison M."/>
            <person name="Cherry J.M."/>
        </authorList>
    </citation>
    <scope>GENOME REANNOTATION</scope>
    <source>
        <strain>ATCC 204508 / S288c</strain>
    </source>
</reference>
<reference key="3">
    <citation type="journal article" date="2000" name="FEBS Lett.">
        <title>Genomic exploration of the hemiascomycetous yeasts: 4. The genome of Saccharomyces cerevisiae revisited.</title>
        <authorList>
            <person name="Blandin G."/>
            <person name="Durrens P."/>
            <person name="Tekaia F."/>
            <person name="Aigle M."/>
            <person name="Bolotin-Fukuhara M."/>
            <person name="Bon E."/>
            <person name="Casaregola S."/>
            <person name="de Montigny J."/>
            <person name="Gaillardin C."/>
            <person name="Lepingle A."/>
            <person name="Llorente B."/>
            <person name="Malpertuy A."/>
            <person name="Neuveglise C."/>
            <person name="Ozier-Kalogeropoulos O."/>
            <person name="Perrin A."/>
            <person name="Potier S."/>
            <person name="Souciet J.-L."/>
            <person name="Talla E."/>
            <person name="Toffano-Nioche C."/>
            <person name="Wesolowski-Louvel M."/>
            <person name="Marck C."/>
            <person name="Dujon B."/>
        </authorList>
    </citation>
    <scope>GENOME REANNOTATION</scope>
</reference>
<reference key="4">
    <citation type="journal article" date="2003" name="Nature">
        <title>Global analysis of protein localization in budding yeast.</title>
        <authorList>
            <person name="Huh W.-K."/>
            <person name="Falvo J.V."/>
            <person name="Gerke L.C."/>
            <person name="Carroll A.S."/>
            <person name="Howson R.W."/>
            <person name="Weissman J.S."/>
            <person name="O'Shea E.K."/>
        </authorList>
    </citation>
    <scope>SUBCELLULAR LOCATION [LARGE SCALE ANALYSIS]</scope>
</reference>
<name>YM007_YEAST</name>